<name>COX2_BRALA</name>
<dbReference type="EC" id="7.1.1.9"/>
<dbReference type="EMBL" id="Y16474">
    <property type="protein sequence ID" value="CAA76250.1"/>
    <property type="molecule type" value="Genomic_DNA"/>
</dbReference>
<dbReference type="PIR" id="E71390">
    <property type="entry name" value="E71390"/>
</dbReference>
<dbReference type="RefSeq" id="NP_007540.1">
    <property type="nucleotide sequence ID" value="NC_001912.1"/>
</dbReference>
<dbReference type="SMR" id="O79417"/>
<dbReference type="GeneID" id="808207"/>
<dbReference type="CTD" id="4513"/>
<dbReference type="GO" id="GO:0005743">
    <property type="term" value="C:mitochondrial inner membrane"/>
    <property type="evidence" value="ECO:0007669"/>
    <property type="project" value="UniProtKB-SubCell"/>
</dbReference>
<dbReference type="GO" id="GO:0005507">
    <property type="term" value="F:copper ion binding"/>
    <property type="evidence" value="ECO:0007669"/>
    <property type="project" value="InterPro"/>
</dbReference>
<dbReference type="GO" id="GO:0004129">
    <property type="term" value="F:cytochrome-c oxidase activity"/>
    <property type="evidence" value="ECO:0007669"/>
    <property type="project" value="UniProtKB-EC"/>
</dbReference>
<dbReference type="GO" id="GO:0042773">
    <property type="term" value="P:ATP synthesis coupled electron transport"/>
    <property type="evidence" value="ECO:0007669"/>
    <property type="project" value="TreeGrafter"/>
</dbReference>
<dbReference type="CDD" id="cd13912">
    <property type="entry name" value="CcO_II_C"/>
    <property type="match status" value="1"/>
</dbReference>
<dbReference type="FunFam" id="1.10.287.90:FF:000017">
    <property type="entry name" value="Cytochrome c oxidase subunit 2"/>
    <property type="match status" value="1"/>
</dbReference>
<dbReference type="FunFam" id="2.60.40.420:FF:000001">
    <property type="entry name" value="Cytochrome c oxidase subunit 2"/>
    <property type="match status" value="1"/>
</dbReference>
<dbReference type="Gene3D" id="1.10.287.90">
    <property type="match status" value="1"/>
</dbReference>
<dbReference type="Gene3D" id="2.60.40.420">
    <property type="entry name" value="Cupredoxins - blue copper proteins"/>
    <property type="match status" value="1"/>
</dbReference>
<dbReference type="InterPro" id="IPR045187">
    <property type="entry name" value="CcO_II"/>
</dbReference>
<dbReference type="InterPro" id="IPR002429">
    <property type="entry name" value="CcO_II-like_C"/>
</dbReference>
<dbReference type="InterPro" id="IPR034210">
    <property type="entry name" value="CcO_II_C"/>
</dbReference>
<dbReference type="InterPro" id="IPR001505">
    <property type="entry name" value="Copper_CuA"/>
</dbReference>
<dbReference type="InterPro" id="IPR008972">
    <property type="entry name" value="Cupredoxin"/>
</dbReference>
<dbReference type="InterPro" id="IPR014222">
    <property type="entry name" value="Cyt_c_oxidase_su2"/>
</dbReference>
<dbReference type="InterPro" id="IPR011759">
    <property type="entry name" value="Cyt_c_oxidase_su2_TM_dom"/>
</dbReference>
<dbReference type="InterPro" id="IPR036257">
    <property type="entry name" value="Cyt_c_oxidase_su2_TM_sf"/>
</dbReference>
<dbReference type="NCBIfam" id="TIGR02866">
    <property type="entry name" value="CoxB"/>
    <property type="match status" value="1"/>
</dbReference>
<dbReference type="PANTHER" id="PTHR22888:SF9">
    <property type="entry name" value="CYTOCHROME C OXIDASE SUBUNIT 2"/>
    <property type="match status" value="1"/>
</dbReference>
<dbReference type="PANTHER" id="PTHR22888">
    <property type="entry name" value="CYTOCHROME C OXIDASE, SUBUNIT II"/>
    <property type="match status" value="1"/>
</dbReference>
<dbReference type="Pfam" id="PF00116">
    <property type="entry name" value="COX2"/>
    <property type="match status" value="1"/>
</dbReference>
<dbReference type="Pfam" id="PF02790">
    <property type="entry name" value="COX2_TM"/>
    <property type="match status" value="1"/>
</dbReference>
<dbReference type="PRINTS" id="PR01166">
    <property type="entry name" value="CYCOXIDASEII"/>
</dbReference>
<dbReference type="SUPFAM" id="SSF49503">
    <property type="entry name" value="Cupredoxins"/>
    <property type="match status" value="1"/>
</dbReference>
<dbReference type="SUPFAM" id="SSF81464">
    <property type="entry name" value="Cytochrome c oxidase subunit II-like, transmembrane region"/>
    <property type="match status" value="1"/>
</dbReference>
<dbReference type="PROSITE" id="PS00078">
    <property type="entry name" value="COX2"/>
    <property type="match status" value="1"/>
</dbReference>
<dbReference type="PROSITE" id="PS50857">
    <property type="entry name" value="COX2_CUA"/>
    <property type="match status" value="1"/>
</dbReference>
<dbReference type="PROSITE" id="PS50999">
    <property type="entry name" value="COX2_TM"/>
    <property type="match status" value="1"/>
</dbReference>
<comment type="function">
    <text evidence="1">Component of the cytochrome c oxidase, the last enzyme in the mitochondrial electron transport chain which drives oxidative phosphorylation. The respiratory chain contains 3 multisubunit complexes succinate dehydrogenase (complex II, CII), ubiquinol-cytochrome c oxidoreductase (cytochrome b-c1 complex, complex III, CIII) and cytochrome c oxidase (complex IV, CIV), that cooperate to transfer electrons derived from NADH and succinate to molecular oxygen, creating an electrochemical gradient over the inner membrane that drives transmembrane transport and the ATP synthase. Cytochrome c oxidase is the component of the respiratory chain that catalyzes the reduction of oxygen to water. Electrons originating from reduced cytochrome c in the intermembrane space (IMS) are transferred via the dinuclear copper A center (CU(A)) of subunit 2 and heme A of subunit 1 to the active site in subunit 1, a binuclear center (BNC) formed by heme A3 and copper B (CU(B)). The BNC reduces molecular oxygen to 2 water molecules using 4 electrons from cytochrome c in the IMS and 4 protons from the mitochondrial matrix.</text>
</comment>
<comment type="catalytic activity">
    <reaction evidence="1">
        <text>4 Fe(II)-[cytochrome c] + O2 + 8 H(+)(in) = 4 Fe(III)-[cytochrome c] + 2 H2O + 4 H(+)(out)</text>
        <dbReference type="Rhea" id="RHEA:11436"/>
        <dbReference type="Rhea" id="RHEA-COMP:10350"/>
        <dbReference type="Rhea" id="RHEA-COMP:14399"/>
        <dbReference type="ChEBI" id="CHEBI:15377"/>
        <dbReference type="ChEBI" id="CHEBI:15378"/>
        <dbReference type="ChEBI" id="CHEBI:15379"/>
        <dbReference type="ChEBI" id="CHEBI:29033"/>
        <dbReference type="ChEBI" id="CHEBI:29034"/>
        <dbReference type="EC" id="7.1.1.9"/>
    </reaction>
    <physiologicalReaction direction="left-to-right" evidence="1">
        <dbReference type="Rhea" id="RHEA:11437"/>
    </physiologicalReaction>
</comment>
<comment type="cofactor">
    <cofactor evidence="1">
        <name>Cu cation</name>
        <dbReference type="ChEBI" id="CHEBI:23378"/>
    </cofactor>
    <text evidence="1">Binds a dinuclear copper A center per subunit.</text>
</comment>
<comment type="subunit">
    <text evidence="1">Component of the cytochrome c oxidase (complex IV, CIV), a multisubunit enzyme composed of a catalytic core of 3 subunits and several supernumerary subunits. The complex exists as a monomer or a dimer and forms supercomplexes (SCs) in the inner mitochondrial membrane with ubiquinol-cytochrome c oxidoreductase (cytochrome b-c1 complex, complex III, CIII).</text>
</comment>
<comment type="subcellular location">
    <subcellularLocation>
        <location evidence="1">Mitochondrion inner membrane</location>
        <topology evidence="1">Multi-pass membrane protein</topology>
    </subcellularLocation>
</comment>
<comment type="similarity">
    <text evidence="3">Belongs to the cytochrome c oxidase subunit 2 family.</text>
</comment>
<accession>O79417</accession>
<sequence length="239" mass="26951">MATPAQLGLMDAASPVMEEMIYFHDHVMLVLILITCLIFYSMLVLISSKYIYRFLTDGHVIETVWTVIPAIILVVVALPSLKLLYLTDELDNPQLTIKSVGHQWYWSYEYTDYYDIEFDSYMLPLGDLSKGDARLLEVDNRVVLPVDTSVRVLVTAADVIHSWTVPSLGLKMDAVPGRLNQLALQCSRVGTFYGQCSEICGANHSFMPIVIEAVPVEVFEGWCDMMLDEESLGSLNMKR</sequence>
<geneLocation type="mitochondrion"/>
<proteinExistence type="inferred from homology"/>
<gene>
    <name type="primary">COII</name>
</gene>
<protein>
    <recommendedName>
        <fullName>Cytochrome c oxidase subunit 2</fullName>
        <ecNumber>7.1.1.9</ecNumber>
    </recommendedName>
    <alternativeName>
        <fullName>Cytochrome c oxidase polypeptide II</fullName>
    </alternativeName>
</protein>
<reference key="1">
    <citation type="journal article" date="1998" name="Nucleic Acids Res.">
        <title>Complete sequence of the amphioxus (Branchiostoma lanceolatum) mitochondrial genome: relations to vertebrates.</title>
        <authorList>
            <person name="Spruyt N."/>
            <person name="Delarbre C."/>
            <person name="Gachelin G."/>
            <person name="Laudet V."/>
        </authorList>
    </citation>
    <scope>NUCLEOTIDE SEQUENCE [GENOMIC DNA]</scope>
</reference>
<keyword id="KW-0186">Copper</keyword>
<keyword id="KW-0249">Electron transport</keyword>
<keyword id="KW-0460">Magnesium</keyword>
<keyword id="KW-0472">Membrane</keyword>
<keyword id="KW-0479">Metal-binding</keyword>
<keyword id="KW-0496">Mitochondrion</keyword>
<keyword id="KW-0999">Mitochondrion inner membrane</keyword>
<keyword id="KW-0679">Respiratory chain</keyword>
<keyword id="KW-1278">Translocase</keyword>
<keyword id="KW-0812">Transmembrane</keyword>
<keyword id="KW-1133">Transmembrane helix</keyword>
<keyword id="KW-0813">Transport</keyword>
<feature type="chain" id="PRO_0000183519" description="Cytochrome c oxidase subunit 2">
    <location>
        <begin position="1"/>
        <end position="239"/>
    </location>
</feature>
<feature type="topological domain" description="Mitochondrial intermembrane" evidence="2">
    <location>
        <begin position="1"/>
        <end position="26"/>
    </location>
</feature>
<feature type="transmembrane region" description="Helical" evidence="2">
    <location>
        <begin position="27"/>
        <end position="48"/>
    </location>
</feature>
<feature type="topological domain" description="Mitochondrial matrix" evidence="2">
    <location>
        <begin position="49"/>
        <end position="62"/>
    </location>
</feature>
<feature type="transmembrane region" description="Helical" evidence="2">
    <location>
        <begin position="63"/>
        <end position="82"/>
    </location>
</feature>
<feature type="topological domain" description="Mitochondrial intermembrane" evidence="2">
    <location>
        <begin position="83"/>
        <end position="239"/>
    </location>
</feature>
<feature type="binding site" evidence="1">
    <location>
        <position position="161"/>
    </location>
    <ligand>
        <name>Cu cation</name>
        <dbReference type="ChEBI" id="CHEBI:23378"/>
        <label>A1</label>
    </ligand>
</feature>
<feature type="binding site" evidence="1">
    <location>
        <position position="196"/>
    </location>
    <ligand>
        <name>Cu cation</name>
        <dbReference type="ChEBI" id="CHEBI:23378"/>
        <label>A1</label>
    </ligand>
</feature>
<feature type="binding site" evidence="1">
    <location>
        <position position="196"/>
    </location>
    <ligand>
        <name>Cu cation</name>
        <dbReference type="ChEBI" id="CHEBI:23378"/>
        <label>A2</label>
    </ligand>
</feature>
<feature type="binding site" evidence="1">
    <location>
        <position position="198"/>
    </location>
    <ligand>
        <name>Cu cation</name>
        <dbReference type="ChEBI" id="CHEBI:23378"/>
        <label>A2</label>
    </ligand>
</feature>
<feature type="binding site" evidence="1">
    <location>
        <position position="198"/>
    </location>
    <ligand>
        <name>Mg(2+)</name>
        <dbReference type="ChEBI" id="CHEBI:18420"/>
        <note>ligand shared with subunit 1</note>
    </ligand>
</feature>
<feature type="binding site" evidence="1">
    <location>
        <position position="200"/>
    </location>
    <ligand>
        <name>Cu cation</name>
        <dbReference type="ChEBI" id="CHEBI:23378"/>
        <label>A1</label>
    </ligand>
</feature>
<feature type="binding site" evidence="1">
    <location>
        <position position="200"/>
    </location>
    <ligand>
        <name>Cu cation</name>
        <dbReference type="ChEBI" id="CHEBI:23378"/>
        <label>A2</label>
    </ligand>
</feature>
<feature type="binding site" evidence="1">
    <location>
        <position position="204"/>
    </location>
    <ligand>
        <name>Cu cation</name>
        <dbReference type="ChEBI" id="CHEBI:23378"/>
        <label>A2</label>
    </ligand>
</feature>
<feature type="binding site" evidence="1">
    <location>
        <position position="207"/>
    </location>
    <ligand>
        <name>Cu cation</name>
        <dbReference type="ChEBI" id="CHEBI:23378"/>
        <label>A1</label>
    </ligand>
</feature>
<evidence type="ECO:0000250" key="1">
    <source>
        <dbReference type="UniProtKB" id="P00410"/>
    </source>
</evidence>
<evidence type="ECO:0000255" key="2"/>
<evidence type="ECO:0000305" key="3"/>
<organism>
    <name type="scientific">Branchiostoma lanceolatum</name>
    <name type="common">Common lancelet</name>
    <name type="synonym">Amphioxus lanceolatum</name>
    <dbReference type="NCBI Taxonomy" id="7740"/>
    <lineage>
        <taxon>Eukaryota</taxon>
        <taxon>Metazoa</taxon>
        <taxon>Chordata</taxon>
        <taxon>Cephalochordata</taxon>
        <taxon>Leptocardii</taxon>
        <taxon>Amphioxiformes</taxon>
        <taxon>Branchiostomatidae</taxon>
        <taxon>Branchiostoma</taxon>
    </lineage>
</organism>